<name>MUKF_PASMU</name>
<keyword id="KW-0106">Calcium</keyword>
<keyword id="KW-0131">Cell cycle</keyword>
<keyword id="KW-0132">Cell division</keyword>
<keyword id="KW-0159">Chromosome partition</keyword>
<keyword id="KW-0963">Cytoplasm</keyword>
<keyword id="KW-0226">DNA condensation</keyword>
<keyword id="KW-1185">Reference proteome</keyword>
<comment type="function">
    <text evidence="1">Involved in chromosome condensation, segregation and cell cycle progression. May participate in facilitating chromosome segregation by condensation DNA from both sides of a centrally located replisome during cell division. Not required for mini-F plasmid partitioning. Probably acts via its interaction with MukB and MukE. Overexpression results in anucleate cells. It has a calcium binding activity.</text>
</comment>
<comment type="subunit">
    <text evidence="1">Interacts, and probably forms a ternary complex, with MukE and MukB via its C-terminal region. The complex formation is stimulated by calcium or magnesium. It is required for an interaction between MukE and MukB.</text>
</comment>
<comment type="subcellular location">
    <subcellularLocation>
        <location evidence="1">Cytoplasm</location>
        <location evidence="1">Nucleoid</location>
    </subcellularLocation>
    <text evidence="1">Restricted to the nucleoid region.</text>
</comment>
<comment type="similarity">
    <text evidence="1">Belongs to the MukF family.</text>
</comment>
<organism>
    <name type="scientific">Pasteurella multocida (strain Pm70)</name>
    <dbReference type="NCBI Taxonomy" id="272843"/>
    <lineage>
        <taxon>Bacteria</taxon>
        <taxon>Pseudomonadati</taxon>
        <taxon>Pseudomonadota</taxon>
        <taxon>Gammaproteobacteria</taxon>
        <taxon>Pasteurellales</taxon>
        <taxon>Pasteurellaceae</taxon>
        <taxon>Pasteurella</taxon>
    </lineage>
</organism>
<reference key="1">
    <citation type="journal article" date="2001" name="Proc. Natl. Acad. Sci. U.S.A.">
        <title>Complete genomic sequence of Pasteurella multocida Pm70.</title>
        <authorList>
            <person name="May B.J."/>
            <person name="Zhang Q."/>
            <person name="Li L.L."/>
            <person name="Paustian M.L."/>
            <person name="Whittam T.S."/>
            <person name="Kapur V."/>
        </authorList>
    </citation>
    <scope>NUCLEOTIDE SEQUENCE [LARGE SCALE GENOMIC DNA]</scope>
    <source>
        <strain>Pm70</strain>
    </source>
</reference>
<gene>
    <name evidence="1" type="primary">mukF</name>
    <name type="ordered locus">PM0607</name>
</gene>
<feature type="chain" id="PRO_0000211607" description="Chromosome partition protein MukF">
    <location>
        <begin position="1"/>
        <end position="441"/>
    </location>
</feature>
<feature type="region of interest" description="Leucine-zipper">
    <location>
        <begin position="208"/>
        <end position="236"/>
    </location>
</feature>
<sequence length="441" mass="50996">MLETSQTIPELVAWTREREFALNLSTERLAFLLAIAIYNNERLDGEMLEADLVDIFRHISTAFEQSNDTIATRANNAINELVKQRFLNRFSSEFTEGLSIYRLTPLGVGISDYYIRQREFSALRLSVQLSIVADEIQRASEAAEEGGDEHHWRRNVFAPLKYSVAEIFDSIDLSQRVMDENQQSIKEEIAELLTKDWQAAIASCEHLLDETSGNLRELQDTLNAAGDKLQAQLLRIQDCVIGQENLAFVEQLITDLQAKLDRIISWGQQAIDLWIGYDRHVHKFIRTAIDMDKNRVFSQRLRHSIHHYFDHPWFLWTAQAERLVDMRDEELTLREEDALGELPEALQYESLADLHEQIVEHMQTLLIAYRERNEPINLSLVLKEQLAHYPLAKHFDVARIIVDQAVRLGLANDDLSGLYPHWEAINDHGAEVQAHKIDEYK</sequence>
<evidence type="ECO:0000255" key="1">
    <source>
        <dbReference type="HAMAP-Rule" id="MF_01803"/>
    </source>
</evidence>
<accession>Q9CN38</accession>
<protein>
    <recommendedName>
        <fullName evidence="1">Chromosome partition protein MukF</fullName>
    </recommendedName>
</protein>
<dbReference type="EMBL" id="AE004439">
    <property type="protein sequence ID" value="AAK02691.1"/>
    <property type="molecule type" value="Genomic_DNA"/>
</dbReference>
<dbReference type="RefSeq" id="WP_010906750.1">
    <property type="nucleotide sequence ID" value="NC_002663.1"/>
</dbReference>
<dbReference type="SMR" id="Q9CN38"/>
<dbReference type="STRING" id="272843.PM0607"/>
<dbReference type="EnsemblBacteria" id="AAK02691">
    <property type="protein sequence ID" value="AAK02691"/>
    <property type="gene ID" value="PM0607"/>
</dbReference>
<dbReference type="KEGG" id="pmu:PM0607"/>
<dbReference type="PATRIC" id="fig|272843.6.peg.615"/>
<dbReference type="HOGENOM" id="CLU_049853_0_0_6"/>
<dbReference type="OrthoDB" id="6450805at2"/>
<dbReference type="Proteomes" id="UP000000809">
    <property type="component" value="Chromosome"/>
</dbReference>
<dbReference type="GO" id="GO:0005737">
    <property type="term" value="C:cytoplasm"/>
    <property type="evidence" value="ECO:0007669"/>
    <property type="project" value="UniProtKB-UniRule"/>
</dbReference>
<dbReference type="GO" id="GO:0009295">
    <property type="term" value="C:nucleoid"/>
    <property type="evidence" value="ECO:0007669"/>
    <property type="project" value="UniProtKB-SubCell"/>
</dbReference>
<dbReference type="GO" id="GO:0005509">
    <property type="term" value="F:calcium ion binding"/>
    <property type="evidence" value="ECO:0007669"/>
    <property type="project" value="UniProtKB-UniRule"/>
</dbReference>
<dbReference type="GO" id="GO:0051301">
    <property type="term" value="P:cell division"/>
    <property type="evidence" value="ECO:0007669"/>
    <property type="project" value="UniProtKB-KW"/>
</dbReference>
<dbReference type="GO" id="GO:0030261">
    <property type="term" value="P:chromosome condensation"/>
    <property type="evidence" value="ECO:0007669"/>
    <property type="project" value="UniProtKB-KW"/>
</dbReference>
<dbReference type="GO" id="GO:0007059">
    <property type="term" value="P:chromosome segregation"/>
    <property type="evidence" value="ECO:0007669"/>
    <property type="project" value="UniProtKB-UniRule"/>
</dbReference>
<dbReference type="GO" id="GO:0006260">
    <property type="term" value="P:DNA replication"/>
    <property type="evidence" value="ECO:0007669"/>
    <property type="project" value="UniProtKB-UniRule"/>
</dbReference>
<dbReference type="CDD" id="cd16337">
    <property type="entry name" value="MukF_C"/>
    <property type="match status" value="1"/>
</dbReference>
<dbReference type="CDD" id="cd16335">
    <property type="entry name" value="MukF_N"/>
    <property type="match status" value="1"/>
</dbReference>
<dbReference type="Gene3D" id="1.20.58.590">
    <property type="entry name" value="Chromosome partition protein MukF, middle domain"/>
    <property type="match status" value="1"/>
</dbReference>
<dbReference type="Gene3D" id="1.10.225.40">
    <property type="entry name" value="MukF, C-terminal domain"/>
    <property type="match status" value="1"/>
</dbReference>
<dbReference type="Gene3D" id="1.10.10.10">
    <property type="entry name" value="Winged helix-like DNA-binding domain superfamily/Winged helix DNA-binding domain"/>
    <property type="match status" value="1"/>
</dbReference>
<dbReference type="HAMAP" id="MF_01803">
    <property type="entry name" value="MukF"/>
    <property type="match status" value="1"/>
</dbReference>
<dbReference type="InterPro" id="IPR005582">
    <property type="entry name" value="Chromosome_partition_MukF"/>
</dbReference>
<dbReference type="InterPro" id="IPR033441">
    <property type="entry name" value="MukF_C"/>
</dbReference>
<dbReference type="InterPro" id="IPR038198">
    <property type="entry name" value="MukF_C_sf"/>
</dbReference>
<dbReference type="InterPro" id="IPR033440">
    <property type="entry name" value="MukF_M"/>
</dbReference>
<dbReference type="InterPro" id="IPR036141">
    <property type="entry name" value="MukF_M_sp"/>
</dbReference>
<dbReference type="InterPro" id="IPR033439">
    <property type="entry name" value="MukF_WHTH"/>
</dbReference>
<dbReference type="InterPro" id="IPR036388">
    <property type="entry name" value="WH-like_DNA-bd_sf"/>
</dbReference>
<dbReference type="InterPro" id="IPR036390">
    <property type="entry name" value="WH_DNA-bd_sf"/>
</dbReference>
<dbReference type="NCBIfam" id="NF003615">
    <property type="entry name" value="PRK05260.1"/>
    <property type="match status" value="1"/>
</dbReference>
<dbReference type="Pfam" id="PF03882">
    <property type="entry name" value="KicB"/>
    <property type="match status" value="1"/>
</dbReference>
<dbReference type="Pfam" id="PF17193">
    <property type="entry name" value="MukF_C"/>
    <property type="match status" value="1"/>
</dbReference>
<dbReference type="Pfam" id="PF17192">
    <property type="entry name" value="MukF_M"/>
    <property type="match status" value="1"/>
</dbReference>
<dbReference type="PIRSF" id="PIRSF018282">
    <property type="entry name" value="MukF"/>
    <property type="match status" value="1"/>
</dbReference>
<dbReference type="SUPFAM" id="SSF140570">
    <property type="entry name" value="MukF C-terminal domain-like"/>
    <property type="match status" value="1"/>
</dbReference>
<dbReference type="SUPFAM" id="SSF46785">
    <property type="entry name" value="Winged helix' DNA-binding domain"/>
    <property type="match status" value="1"/>
</dbReference>
<proteinExistence type="inferred from homology"/>